<name>KUP2_LEGPH</name>
<organism>
    <name type="scientific">Legionella pneumophila subsp. pneumophila (strain Philadelphia 1 / ATCC 33152 / DSM 7513)</name>
    <dbReference type="NCBI Taxonomy" id="272624"/>
    <lineage>
        <taxon>Bacteria</taxon>
        <taxon>Pseudomonadati</taxon>
        <taxon>Pseudomonadota</taxon>
        <taxon>Gammaproteobacteria</taxon>
        <taxon>Legionellales</taxon>
        <taxon>Legionellaceae</taxon>
        <taxon>Legionella</taxon>
    </lineage>
</organism>
<gene>
    <name evidence="1" type="primary">kup2</name>
    <name type="ordered locus">lpg2126</name>
</gene>
<keyword id="KW-0997">Cell inner membrane</keyword>
<keyword id="KW-1003">Cell membrane</keyword>
<keyword id="KW-0406">Ion transport</keyword>
<keyword id="KW-0472">Membrane</keyword>
<keyword id="KW-0630">Potassium</keyword>
<keyword id="KW-0633">Potassium transport</keyword>
<keyword id="KW-1185">Reference proteome</keyword>
<keyword id="KW-0769">Symport</keyword>
<keyword id="KW-0812">Transmembrane</keyword>
<keyword id="KW-1133">Transmembrane helix</keyword>
<keyword id="KW-0813">Transport</keyword>
<sequence>MMNESSTEKKNELSLSFAALGVVFGDIGTSPLYAFGQVIKYFPINDHNIYGILSLIFWSLIIIVSIKYLVIVFRADNDGEGGIIALAGLIRQKIKKPGGWLLFITLVGIGLIIGDGILTPAISILSAVEGLESLSPNLAKYVLPVTLIILFFLFKMQSIGTGKIGIYFAPVMLIWFITIGVLGFLQIIQNPKVLMAINPYYAIYFFMIHKYFALFILGGVFLVMTGGEALFADLGHFGKKAIRTGWFAVALPALLLCYFGQGAFVLMHIEYIKYPFFSLSPDWFLPVMIILATIATIIASQAIISAAFSILKQASLLNLIPRLKIIYTSKFEKGEVYLPLINFILALGTCSLVVIFKSSSNLADAYGIAVNLDMLITTVLVGIIAYYCWNWHAFKVMIFPLILVIELAFFAGNIPKLLTGGWIPILIAFLGFVVMYTWHCGFEKLRELHHRDALMDAFIIDELNQNKISRQSGMGLYIIDPYDCEGESLLHHLRLNRIFFENMIFVSIKIENKPYIPIEDKFELIKKAEGFYLIFIHYGFTENINLPNELDEMFKRVYLPFEIIKNKLIYFIEIVFVEMTRERQKHMYMWQKHLFSLMIRNAVPDIQFYRLPYNKTIAIGTYYQL</sequence>
<protein>
    <recommendedName>
        <fullName evidence="1">Probable potassium transport system protein Kup 2</fullName>
    </recommendedName>
</protein>
<proteinExistence type="inferred from homology"/>
<dbReference type="EMBL" id="AE017354">
    <property type="protein sequence ID" value="AAU28192.1"/>
    <property type="molecule type" value="Genomic_DNA"/>
</dbReference>
<dbReference type="RefSeq" id="WP_010947837.1">
    <property type="nucleotide sequence ID" value="NC_002942.5"/>
</dbReference>
<dbReference type="RefSeq" id="YP_096139.1">
    <property type="nucleotide sequence ID" value="NC_002942.5"/>
</dbReference>
<dbReference type="STRING" id="272624.lpg2126"/>
<dbReference type="PaxDb" id="272624-lpg2126"/>
<dbReference type="KEGG" id="lpn:lpg2126"/>
<dbReference type="PATRIC" id="fig|272624.6.peg.2229"/>
<dbReference type="eggNOG" id="COG3158">
    <property type="taxonomic scope" value="Bacteria"/>
</dbReference>
<dbReference type="HOGENOM" id="CLU_008142_4_2_6"/>
<dbReference type="OrthoDB" id="9805577at2"/>
<dbReference type="Proteomes" id="UP000000609">
    <property type="component" value="Chromosome"/>
</dbReference>
<dbReference type="GO" id="GO:0005886">
    <property type="term" value="C:plasma membrane"/>
    <property type="evidence" value="ECO:0007669"/>
    <property type="project" value="UniProtKB-SubCell"/>
</dbReference>
<dbReference type="GO" id="GO:0015079">
    <property type="term" value="F:potassium ion transmembrane transporter activity"/>
    <property type="evidence" value="ECO:0007669"/>
    <property type="project" value="UniProtKB-UniRule"/>
</dbReference>
<dbReference type="GO" id="GO:0015293">
    <property type="term" value="F:symporter activity"/>
    <property type="evidence" value="ECO:0007669"/>
    <property type="project" value="UniProtKB-UniRule"/>
</dbReference>
<dbReference type="HAMAP" id="MF_01522">
    <property type="entry name" value="Kup"/>
    <property type="match status" value="1"/>
</dbReference>
<dbReference type="InterPro" id="IPR003855">
    <property type="entry name" value="K+_transporter"/>
</dbReference>
<dbReference type="InterPro" id="IPR053952">
    <property type="entry name" value="K_trans_C"/>
</dbReference>
<dbReference type="InterPro" id="IPR053951">
    <property type="entry name" value="K_trans_N"/>
</dbReference>
<dbReference type="InterPro" id="IPR023051">
    <property type="entry name" value="Kup"/>
</dbReference>
<dbReference type="PANTHER" id="PTHR30540:SF83">
    <property type="entry name" value="K+ POTASSIUM TRANSPORTER"/>
    <property type="match status" value="1"/>
</dbReference>
<dbReference type="PANTHER" id="PTHR30540">
    <property type="entry name" value="OSMOTIC STRESS POTASSIUM TRANSPORTER"/>
    <property type="match status" value="1"/>
</dbReference>
<dbReference type="Pfam" id="PF02705">
    <property type="entry name" value="K_trans"/>
    <property type="match status" value="1"/>
</dbReference>
<dbReference type="Pfam" id="PF22776">
    <property type="entry name" value="K_trans_C"/>
    <property type="match status" value="1"/>
</dbReference>
<reference key="1">
    <citation type="journal article" date="2004" name="Science">
        <title>The genomic sequence of the accidental pathogen Legionella pneumophila.</title>
        <authorList>
            <person name="Chien M."/>
            <person name="Morozova I."/>
            <person name="Shi S."/>
            <person name="Sheng H."/>
            <person name="Chen J."/>
            <person name="Gomez S.M."/>
            <person name="Asamani G."/>
            <person name="Hill K."/>
            <person name="Nuara J."/>
            <person name="Feder M."/>
            <person name="Rineer J."/>
            <person name="Greenberg J.J."/>
            <person name="Steshenko V."/>
            <person name="Park S.H."/>
            <person name="Zhao B."/>
            <person name="Teplitskaya E."/>
            <person name="Edwards J.R."/>
            <person name="Pampou S."/>
            <person name="Georghiou A."/>
            <person name="Chou I.-C."/>
            <person name="Iannuccilli W."/>
            <person name="Ulz M.E."/>
            <person name="Kim D.H."/>
            <person name="Geringer-Sameth A."/>
            <person name="Goldsberry C."/>
            <person name="Morozov P."/>
            <person name="Fischer S.G."/>
            <person name="Segal G."/>
            <person name="Qu X."/>
            <person name="Rzhetsky A."/>
            <person name="Zhang P."/>
            <person name="Cayanis E."/>
            <person name="De Jong P.J."/>
            <person name="Ju J."/>
            <person name="Kalachikov S."/>
            <person name="Shuman H.A."/>
            <person name="Russo J.J."/>
        </authorList>
    </citation>
    <scope>NUCLEOTIDE SEQUENCE [LARGE SCALE GENOMIC DNA]</scope>
    <source>
        <strain>Philadelphia 1 / ATCC 33152 / DSM 7513</strain>
    </source>
</reference>
<accession>Q5ZTN5</accession>
<evidence type="ECO:0000255" key="1">
    <source>
        <dbReference type="HAMAP-Rule" id="MF_01522"/>
    </source>
</evidence>
<feature type="chain" id="PRO_0000209033" description="Probable potassium transport system protein Kup 2">
    <location>
        <begin position="1"/>
        <end position="625"/>
    </location>
</feature>
<feature type="transmembrane region" description="Helical" evidence="1">
    <location>
        <begin position="15"/>
        <end position="35"/>
    </location>
</feature>
<feature type="transmembrane region" description="Helical" evidence="1">
    <location>
        <begin position="52"/>
        <end position="72"/>
    </location>
</feature>
<feature type="transmembrane region" description="Helical" evidence="1">
    <location>
        <begin position="98"/>
        <end position="118"/>
    </location>
</feature>
<feature type="transmembrane region" description="Helical" evidence="1">
    <location>
        <begin position="134"/>
        <end position="154"/>
    </location>
</feature>
<feature type="transmembrane region" description="Helical" evidence="1">
    <location>
        <begin position="164"/>
        <end position="184"/>
    </location>
</feature>
<feature type="transmembrane region" description="Helical" evidence="1">
    <location>
        <begin position="203"/>
        <end position="223"/>
    </location>
</feature>
<feature type="transmembrane region" description="Helical" evidence="1">
    <location>
        <begin position="246"/>
        <end position="266"/>
    </location>
</feature>
<feature type="transmembrane region" description="Helical" evidence="1">
    <location>
        <begin position="284"/>
        <end position="304"/>
    </location>
</feature>
<feature type="transmembrane region" description="Helical" evidence="1">
    <location>
        <begin position="336"/>
        <end position="356"/>
    </location>
</feature>
<feature type="transmembrane region" description="Helical" evidence="1">
    <location>
        <begin position="365"/>
        <end position="385"/>
    </location>
</feature>
<feature type="transmembrane region" description="Helical" evidence="1">
    <location>
        <begin position="394"/>
        <end position="414"/>
    </location>
</feature>
<feature type="transmembrane region" description="Helical" evidence="1">
    <location>
        <begin position="417"/>
        <end position="437"/>
    </location>
</feature>
<comment type="function">
    <text evidence="1">Transport of potassium into the cell. Likely operates as a K(+):H(+) symporter.</text>
</comment>
<comment type="catalytic activity">
    <reaction evidence="1">
        <text>K(+)(in) + H(+)(in) = K(+)(out) + H(+)(out)</text>
        <dbReference type="Rhea" id="RHEA:28490"/>
        <dbReference type="ChEBI" id="CHEBI:15378"/>
        <dbReference type="ChEBI" id="CHEBI:29103"/>
    </reaction>
    <physiologicalReaction direction="right-to-left" evidence="1">
        <dbReference type="Rhea" id="RHEA:28492"/>
    </physiologicalReaction>
</comment>
<comment type="subcellular location">
    <subcellularLocation>
        <location evidence="1">Cell inner membrane</location>
        <topology evidence="1">Multi-pass membrane protein</topology>
    </subcellularLocation>
</comment>
<comment type="similarity">
    <text evidence="1">Belongs to the HAK/KUP transporter (TC 2.A.72) family.</text>
</comment>